<keyword id="KW-0051">Antiviral defense</keyword>
<keyword id="KW-0238">DNA-binding</keyword>
<keyword id="KW-0255">Endonuclease</keyword>
<keyword id="KW-0378">Hydrolase</keyword>
<keyword id="KW-0460">Magnesium</keyword>
<keyword id="KW-0464">Manganese</keyword>
<keyword id="KW-0479">Metal-binding</keyword>
<keyword id="KW-0540">Nuclease</keyword>
<keyword id="KW-1185">Reference proteome</keyword>
<feature type="chain" id="PRO_0000417101" description="CRISPR-associated endonuclease Cas1 1">
    <location>
        <begin position="1"/>
        <end position="331"/>
    </location>
</feature>
<feature type="binding site" evidence="1">
    <location>
        <position position="161"/>
    </location>
    <ligand>
        <name>Mn(2+)</name>
        <dbReference type="ChEBI" id="CHEBI:29035"/>
    </ligand>
</feature>
<feature type="binding site" evidence="1">
    <location>
        <position position="226"/>
    </location>
    <ligand>
        <name>Mn(2+)</name>
        <dbReference type="ChEBI" id="CHEBI:29035"/>
    </ligand>
</feature>
<feature type="binding site" evidence="1">
    <location>
        <position position="241"/>
    </location>
    <ligand>
        <name>Mn(2+)</name>
        <dbReference type="ChEBI" id="CHEBI:29035"/>
    </ligand>
</feature>
<proteinExistence type="inferred from homology"/>
<organism>
    <name type="scientific">Methanospirillum hungatei JF-1 (strain ATCC 27890 / DSM 864 / NBRC 100397 / JF-1)</name>
    <dbReference type="NCBI Taxonomy" id="323259"/>
    <lineage>
        <taxon>Archaea</taxon>
        <taxon>Methanobacteriati</taxon>
        <taxon>Methanobacteriota</taxon>
        <taxon>Stenosarchaea group</taxon>
        <taxon>Methanomicrobia</taxon>
        <taxon>Methanomicrobiales</taxon>
        <taxon>Methanospirillaceae</taxon>
        <taxon>Methanospirillum</taxon>
    </lineage>
</organism>
<gene>
    <name evidence="1" type="primary">cas1-1</name>
    <name type="ordered locus">Mhun_0735</name>
</gene>
<sequence>MNSVLITGAGYRIRKRGDVLTIETGKDSDTAEPPRTLSPLGLDLLAIAGDHSISTAAVRLVTSHGGAIALMDGLGNPFGHFLPLGRSALIEQYEAQASAPEERRLEIARSICTGALENKRTLLSNLERIRGFDLSREIRLVEDAQDKALECQSLDSLRGVEGSGAHAYFQGFSLAFDEEWGFLGRSQNPATDPVNSLLSYGYGMLYIQARQALVLSGYSPYYGAYHETYKKQEALVYDLVEEFRQPVVDRTVVTFLAKHMATPDDFTYPDEGGCMIGTMAKKKYAAAVLTRIHGKVKYEEQTFQDIFKRQAERIGKALTEGDEYVPYRYRT</sequence>
<accession>Q2FL78</accession>
<protein>
    <recommendedName>
        <fullName evidence="1">CRISPR-associated endonuclease Cas1 1</fullName>
        <ecNumber evidence="1">3.1.-.-</ecNumber>
    </recommendedName>
</protein>
<dbReference type="EC" id="3.1.-.-" evidence="1"/>
<dbReference type="EMBL" id="CP000254">
    <property type="protein sequence ID" value="ABD40488.1"/>
    <property type="molecule type" value="Genomic_DNA"/>
</dbReference>
<dbReference type="RefSeq" id="WP_011447767.1">
    <property type="nucleotide sequence ID" value="NC_007796.1"/>
</dbReference>
<dbReference type="SMR" id="Q2FL78"/>
<dbReference type="STRING" id="323259.Mhun_0735"/>
<dbReference type="EnsemblBacteria" id="ABD40488">
    <property type="protein sequence ID" value="ABD40488"/>
    <property type="gene ID" value="Mhun_0735"/>
</dbReference>
<dbReference type="GeneID" id="3923162"/>
<dbReference type="KEGG" id="mhu:Mhun_0735"/>
<dbReference type="eggNOG" id="arCOG01452">
    <property type="taxonomic scope" value="Archaea"/>
</dbReference>
<dbReference type="HOGENOM" id="CLU_052779_1_0_2"/>
<dbReference type="InParanoid" id="Q2FL78"/>
<dbReference type="OrthoDB" id="2216at2157"/>
<dbReference type="Proteomes" id="UP000001941">
    <property type="component" value="Chromosome"/>
</dbReference>
<dbReference type="GO" id="GO:0003677">
    <property type="term" value="F:DNA binding"/>
    <property type="evidence" value="ECO:0007669"/>
    <property type="project" value="UniProtKB-KW"/>
</dbReference>
<dbReference type="GO" id="GO:0004519">
    <property type="term" value="F:endonuclease activity"/>
    <property type="evidence" value="ECO:0007669"/>
    <property type="project" value="UniProtKB-UniRule"/>
</dbReference>
<dbReference type="GO" id="GO:0046872">
    <property type="term" value="F:metal ion binding"/>
    <property type="evidence" value="ECO:0007669"/>
    <property type="project" value="UniProtKB-UniRule"/>
</dbReference>
<dbReference type="GO" id="GO:0051607">
    <property type="term" value="P:defense response to virus"/>
    <property type="evidence" value="ECO:0007669"/>
    <property type="project" value="UniProtKB-UniRule"/>
</dbReference>
<dbReference type="GO" id="GO:0043571">
    <property type="term" value="P:maintenance of CRISPR repeat elements"/>
    <property type="evidence" value="ECO:0007669"/>
    <property type="project" value="UniProtKB-UniRule"/>
</dbReference>
<dbReference type="CDD" id="cd09634">
    <property type="entry name" value="Cas1_I-II-III"/>
    <property type="match status" value="1"/>
</dbReference>
<dbReference type="Gene3D" id="1.20.120.920">
    <property type="entry name" value="CRISPR-associated endonuclease Cas1, C-terminal domain"/>
    <property type="match status" value="1"/>
</dbReference>
<dbReference type="Gene3D" id="3.100.10.20">
    <property type="entry name" value="CRISPR-associated endonuclease Cas1, N-terminal domain"/>
    <property type="match status" value="1"/>
</dbReference>
<dbReference type="HAMAP" id="MF_01470">
    <property type="entry name" value="Cas1"/>
    <property type="match status" value="1"/>
</dbReference>
<dbReference type="InterPro" id="IPR050646">
    <property type="entry name" value="Cas1"/>
</dbReference>
<dbReference type="InterPro" id="IPR002729">
    <property type="entry name" value="CRISPR-assoc_Cas1"/>
</dbReference>
<dbReference type="InterPro" id="IPR042206">
    <property type="entry name" value="CRISPR-assoc_Cas1_C"/>
</dbReference>
<dbReference type="InterPro" id="IPR042211">
    <property type="entry name" value="CRISPR-assoc_Cas1_N"/>
</dbReference>
<dbReference type="NCBIfam" id="TIGR00287">
    <property type="entry name" value="cas1"/>
    <property type="match status" value="1"/>
</dbReference>
<dbReference type="PANTHER" id="PTHR34353">
    <property type="entry name" value="CRISPR-ASSOCIATED ENDONUCLEASE CAS1 1"/>
    <property type="match status" value="1"/>
</dbReference>
<dbReference type="PANTHER" id="PTHR34353:SF2">
    <property type="entry name" value="CRISPR-ASSOCIATED ENDONUCLEASE CAS1 1"/>
    <property type="match status" value="1"/>
</dbReference>
<dbReference type="Pfam" id="PF01867">
    <property type="entry name" value="Cas_Cas1"/>
    <property type="match status" value="1"/>
</dbReference>
<comment type="function">
    <text evidence="1">CRISPR (clustered regularly interspaced short palindromic repeat), is an adaptive immune system that provides protection against mobile genetic elements (viruses, transposable elements and conjugative plasmids). CRISPR clusters contain spacers, sequences complementary to antecedent mobile elements, and target invading nucleic acids. CRISPR clusters are transcribed and processed into CRISPR RNA (crRNA). Acts as a dsDNA endonuclease. Involved in the integration of spacer DNA into the CRISPR cassette.</text>
</comment>
<comment type="cofactor">
    <cofactor evidence="1">
        <name>Mg(2+)</name>
        <dbReference type="ChEBI" id="CHEBI:18420"/>
    </cofactor>
    <cofactor evidence="1">
        <name>Mn(2+)</name>
        <dbReference type="ChEBI" id="CHEBI:29035"/>
    </cofactor>
</comment>
<comment type="subunit">
    <text evidence="1">Homodimer, forms a heterotetramer with a Cas2 homodimer.</text>
</comment>
<comment type="similarity">
    <text evidence="1">Belongs to the CRISPR-associated endonuclease Cas1 family.</text>
</comment>
<evidence type="ECO:0000255" key="1">
    <source>
        <dbReference type="HAMAP-Rule" id="MF_01470"/>
    </source>
</evidence>
<reference key="1">
    <citation type="journal article" date="2016" name="Stand. Genomic Sci.">
        <title>Complete genome sequence of Methanospirillum hungatei type strain JF1.</title>
        <authorList>
            <person name="Gunsalus R.P."/>
            <person name="Cook L.E."/>
            <person name="Crable B."/>
            <person name="Rohlin L."/>
            <person name="McDonald E."/>
            <person name="Mouttaki H."/>
            <person name="Sieber J.R."/>
            <person name="Poweleit N."/>
            <person name="Zhou H."/>
            <person name="Lapidus A.L."/>
            <person name="Daligault H.E."/>
            <person name="Land M."/>
            <person name="Gilna P."/>
            <person name="Ivanova N."/>
            <person name="Kyrpides N."/>
            <person name="Culley D.E."/>
            <person name="McInerney M.J."/>
        </authorList>
    </citation>
    <scope>NUCLEOTIDE SEQUENCE [LARGE SCALE GENOMIC DNA]</scope>
    <source>
        <strain>ATCC 27890 / DSM 864 / NBRC 100397 / JF-1</strain>
    </source>
</reference>
<name>CAS1A_METHJ</name>